<gene>
    <name type="primary">cdd</name>
    <name type="ordered locus">BSU25300</name>
</gene>
<reference key="1">
    <citation type="journal article" date="1989" name="Mol. Gen. Genet.">
        <title>Chromosomal location, cloning and nucleotide sequence of the Bacillus subtilis cdd gene encoding cytidine/deoxycytidine deaminase.</title>
        <authorList>
            <person name="Song B.-H."/>
            <person name="Neuhard J."/>
        </authorList>
    </citation>
    <scope>NUCLEOTIDE SEQUENCE [GENOMIC DNA]</scope>
    <source>
        <strain>168</strain>
    </source>
</reference>
<reference key="2">
    <citation type="journal article" date="1996" name="Microbiology">
        <title>Systematic sequencing of the 283 kb 210 degrees-232 degrees region of the Bacillus subtilis genome containing the skin element and many sporulation genes.</title>
        <authorList>
            <person name="Mizuno M."/>
            <person name="Masuda S."/>
            <person name="Takemaru K."/>
            <person name="Hosono S."/>
            <person name="Sato T."/>
            <person name="Takeuchi M."/>
            <person name="Kobayashi Y."/>
        </authorList>
    </citation>
    <scope>NUCLEOTIDE SEQUENCE [GENOMIC DNA]</scope>
    <source>
        <strain>168 / JH642</strain>
    </source>
</reference>
<reference key="3">
    <citation type="journal article" date="1997" name="Nature">
        <title>The complete genome sequence of the Gram-positive bacterium Bacillus subtilis.</title>
        <authorList>
            <person name="Kunst F."/>
            <person name="Ogasawara N."/>
            <person name="Moszer I."/>
            <person name="Albertini A.M."/>
            <person name="Alloni G."/>
            <person name="Azevedo V."/>
            <person name="Bertero M.G."/>
            <person name="Bessieres P."/>
            <person name="Bolotin A."/>
            <person name="Borchert S."/>
            <person name="Borriss R."/>
            <person name="Boursier L."/>
            <person name="Brans A."/>
            <person name="Braun M."/>
            <person name="Brignell S.C."/>
            <person name="Bron S."/>
            <person name="Brouillet S."/>
            <person name="Bruschi C.V."/>
            <person name="Caldwell B."/>
            <person name="Capuano V."/>
            <person name="Carter N.M."/>
            <person name="Choi S.-K."/>
            <person name="Codani J.-J."/>
            <person name="Connerton I.F."/>
            <person name="Cummings N.J."/>
            <person name="Daniel R.A."/>
            <person name="Denizot F."/>
            <person name="Devine K.M."/>
            <person name="Duesterhoeft A."/>
            <person name="Ehrlich S.D."/>
            <person name="Emmerson P.T."/>
            <person name="Entian K.-D."/>
            <person name="Errington J."/>
            <person name="Fabret C."/>
            <person name="Ferrari E."/>
            <person name="Foulger D."/>
            <person name="Fritz C."/>
            <person name="Fujita M."/>
            <person name="Fujita Y."/>
            <person name="Fuma S."/>
            <person name="Galizzi A."/>
            <person name="Galleron N."/>
            <person name="Ghim S.-Y."/>
            <person name="Glaser P."/>
            <person name="Goffeau A."/>
            <person name="Golightly E.J."/>
            <person name="Grandi G."/>
            <person name="Guiseppi G."/>
            <person name="Guy B.J."/>
            <person name="Haga K."/>
            <person name="Haiech J."/>
            <person name="Harwood C.R."/>
            <person name="Henaut A."/>
            <person name="Hilbert H."/>
            <person name="Holsappel S."/>
            <person name="Hosono S."/>
            <person name="Hullo M.-F."/>
            <person name="Itaya M."/>
            <person name="Jones L.-M."/>
            <person name="Joris B."/>
            <person name="Karamata D."/>
            <person name="Kasahara Y."/>
            <person name="Klaerr-Blanchard M."/>
            <person name="Klein C."/>
            <person name="Kobayashi Y."/>
            <person name="Koetter P."/>
            <person name="Koningstein G."/>
            <person name="Krogh S."/>
            <person name="Kumano M."/>
            <person name="Kurita K."/>
            <person name="Lapidus A."/>
            <person name="Lardinois S."/>
            <person name="Lauber J."/>
            <person name="Lazarevic V."/>
            <person name="Lee S.-M."/>
            <person name="Levine A."/>
            <person name="Liu H."/>
            <person name="Masuda S."/>
            <person name="Mauel C."/>
            <person name="Medigue C."/>
            <person name="Medina N."/>
            <person name="Mellado R.P."/>
            <person name="Mizuno M."/>
            <person name="Moestl D."/>
            <person name="Nakai S."/>
            <person name="Noback M."/>
            <person name="Noone D."/>
            <person name="O'Reilly M."/>
            <person name="Ogawa K."/>
            <person name="Ogiwara A."/>
            <person name="Oudega B."/>
            <person name="Park S.-H."/>
            <person name="Parro V."/>
            <person name="Pohl T.M."/>
            <person name="Portetelle D."/>
            <person name="Porwollik S."/>
            <person name="Prescott A.M."/>
            <person name="Presecan E."/>
            <person name="Pujic P."/>
            <person name="Purnelle B."/>
            <person name="Rapoport G."/>
            <person name="Rey M."/>
            <person name="Reynolds S."/>
            <person name="Rieger M."/>
            <person name="Rivolta C."/>
            <person name="Rocha E."/>
            <person name="Roche B."/>
            <person name="Rose M."/>
            <person name="Sadaie Y."/>
            <person name="Sato T."/>
            <person name="Scanlan E."/>
            <person name="Schleich S."/>
            <person name="Schroeter R."/>
            <person name="Scoffone F."/>
            <person name="Sekiguchi J."/>
            <person name="Sekowska A."/>
            <person name="Seror S.J."/>
            <person name="Serror P."/>
            <person name="Shin B.-S."/>
            <person name="Soldo B."/>
            <person name="Sorokin A."/>
            <person name="Tacconi E."/>
            <person name="Takagi T."/>
            <person name="Takahashi H."/>
            <person name="Takemaru K."/>
            <person name="Takeuchi M."/>
            <person name="Tamakoshi A."/>
            <person name="Tanaka T."/>
            <person name="Terpstra P."/>
            <person name="Tognoni A."/>
            <person name="Tosato V."/>
            <person name="Uchiyama S."/>
            <person name="Vandenbol M."/>
            <person name="Vannier F."/>
            <person name="Vassarotti A."/>
            <person name="Viari A."/>
            <person name="Wambutt R."/>
            <person name="Wedler E."/>
            <person name="Wedler H."/>
            <person name="Weitzenegger T."/>
            <person name="Winters P."/>
            <person name="Wipat A."/>
            <person name="Yamamoto H."/>
            <person name="Yamane K."/>
            <person name="Yasumoto K."/>
            <person name="Yata K."/>
            <person name="Yoshida K."/>
            <person name="Yoshikawa H.-F."/>
            <person name="Zumstein E."/>
            <person name="Yoshikawa H."/>
            <person name="Danchin A."/>
        </authorList>
    </citation>
    <scope>NUCLEOTIDE SEQUENCE [LARGE SCALE GENOMIC DNA]</scope>
    <source>
        <strain>168</strain>
    </source>
</reference>
<reference key="4">
    <citation type="submission" date="1995-07" db="EMBL/GenBank/DDBJ databases">
        <title>Nucleotide sequence upstream of the cdd locus in Bacillus subtilis.</title>
        <authorList>
            <person name="Kim K."/>
            <person name="Hwang S."/>
            <person name="Suh J."/>
            <person name="Song B.-H."/>
            <person name="Hong S."/>
            <person name="Kim J."/>
        </authorList>
    </citation>
    <scope>NUCLEOTIDE SEQUENCE [GENOMIC DNA] OF 1-10</scope>
    <source>
        <strain>ED40</strain>
    </source>
</reference>
<reference key="5">
    <citation type="journal article" date="2002" name="Biochemistry">
        <title>Crystal structure of the tetrameric cytidine deaminase from Bacillus subtilis at 2.0 A resolution.</title>
        <authorList>
            <person name="Johansson E."/>
            <person name="Mejlhede N."/>
            <person name="Neuhard J."/>
            <person name="Larsen S."/>
        </authorList>
    </citation>
    <scope>X-RAY CRYSTALLOGRAPHY (2.0 ANGSTROMS) IN COMPLEX WITH SUBSTRATE ANALOG AND ZINC IONS</scope>
    <scope>SUBUNIT</scope>
</reference>
<reference key="6">
    <citation type="journal article" date="2004" name="Biochemistry">
        <title>Structural, kinetic, and mutational studies of the zinc ion environment in tetrameric cytidine deaminase.</title>
        <authorList>
            <person name="Johansson E."/>
            <person name="Neuhard J."/>
            <person name="Willemoes M."/>
            <person name="Larsen S."/>
        </authorList>
    </citation>
    <scope>X-RAY CRYSTALLOGRAPHY (1.99 ANGSTROMS) OF MUTANTS IN COMPLEX WITH SUBSTRATE ANALOG AND ZINC IONS</scope>
    <scope>SUBUNIT</scope>
    <scope>MUTAGENESIS OF CYS-53 AND ARG-56</scope>
</reference>
<comment type="function">
    <text>This enzyme scavenges exogenous and endogenous cytidine and 2'-deoxycytidine for UMP synthesis.</text>
</comment>
<comment type="catalytic activity">
    <reaction>
        <text>cytidine + H2O + H(+) = uridine + NH4(+)</text>
        <dbReference type="Rhea" id="RHEA:16069"/>
        <dbReference type="ChEBI" id="CHEBI:15377"/>
        <dbReference type="ChEBI" id="CHEBI:15378"/>
        <dbReference type="ChEBI" id="CHEBI:16704"/>
        <dbReference type="ChEBI" id="CHEBI:17562"/>
        <dbReference type="ChEBI" id="CHEBI:28938"/>
        <dbReference type="EC" id="3.5.4.5"/>
    </reaction>
</comment>
<comment type="catalytic activity">
    <reaction>
        <text>2'-deoxycytidine + H2O + H(+) = 2'-deoxyuridine + NH4(+)</text>
        <dbReference type="Rhea" id="RHEA:13433"/>
        <dbReference type="ChEBI" id="CHEBI:15377"/>
        <dbReference type="ChEBI" id="CHEBI:15378"/>
        <dbReference type="ChEBI" id="CHEBI:15698"/>
        <dbReference type="ChEBI" id="CHEBI:16450"/>
        <dbReference type="ChEBI" id="CHEBI:28938"/>
        <dbReference type="EC" id="3.5.4.5"/>
    </reaction>
</comment>
<comment type="cofactor">
    <cofactor>
        <name>Zn(2+)</name>
        <dbReference type="ChEBI" id="CHEBI:29105"/>
    </cofactor>
    <text>Binds 1 zinc ion per subunit.</text>
</comment>
<comment type="subunit">
    <text evidence="2 3">Homotetramer.</text>
</comment>
<comment type="similarity">
    <text evidence="4">Belongs to the cytidine and deoxycytidylate deaminase family.</text>
</comment>
<name>CDD_BACSU</name>
<dbReference type="EC" id="3.5.4.5"/>
<dbReference type="EMBL" id="U18532">
    <property type="protein sequence ID" value="AAB59993.1"/>
    <property type="molecule type" value="Genomic_DNA"/>
</dbReference>
<dbReference type="EMBL" id="X17430">
    <property type="protein sequence ID" value="CAB57856.1"/>
    <property type="molecule type" value="Genomic_DNA"/>
</dbReference>
<dbReference type="EMBL" id="D84432">
    <property type="protein sequence ID" value="BAA12481.1"/>
    <property type="molecule type" value="Genomic_DNA"/>
</dbReference>
<dbReference type="EMBL" id="K02174">
    <property type="protein sequence ID" value="AAB05347.1"/>
    <property type="molecule type" value="Genomic_DNA"/>
</dbReference>
<dbReference type="EMBL" id="AL009126">
    <property type="protein sequence ID" value="CAB14459.1"/>
    <property type="molecule type" value="Genomic_DNA"/>
</dbReference>
<dbReference type="EMBL" id="U29177">
    <property type="protein sequence ID" value="AAA70045.1"/>
    <property type="molecule type" value="Genomic_DNA"/>
</dbReference>
<dbReference type="PIR" id="JE0022">
    <property type="entry name" value="JE0022"/>
</dbReference>
<dbReference type="RefSeq" id="NP_390408.1">
    <property type="nucleotide sequence ID" value="NC_000964.3"/>
</dbReference>
<dbReference type="RefSeq" id="WP_003230049.1">
    <property type="nucleotide sequence ID" value="NZ_OZ025638.1"/>
</dbReference>
<dbReference type="PDB" id="1JTK">
    <property type="method" value="X-ray"/>
    <property type="resolution" value="2.04 A"/>
    <property type="chains" value="A/B=1-136"/>
</dbReference>
<dbReference type="PDB" id="1UWZ">
    <property type="method" value="X-ray"/>
    <property type="resolution" value="1.99 A"/>
    <property type="chains" value="A/B=1-136"/>
</dbReference>
<dbReference type="PDB" id="1UX0">
    <property type="method" value="X-ray"/>
    <property type="resolution" value="1.99 A"/>
    <property type="chains" value="A/B=1-136"/>
</dbReference>
<dbReference type="PDB" id="1UX1">
    <property type="method" value="X-ray"/>
    <property type="resolution" value="2.36 A"/>
    <property type="chains" value="A/B/C/D=1-136"/>
</dbReference>
<dbReference type="PDBsum" id="1JTK"/>
<dbReference type="PDBsum" id="1UWZ"/>
<dbReference type="PDBsum" id="1UX0"/>
<dbReference type="PDBsum" id="1UX1"/>
<dbReference type="SMR" id="P19079"/>
<dbReference type="FunCoup" id="P19079">
    <property type="interactions" value="184"/>
</dbReference>
<dbReference type="STRING" id="224308.BSU25300"/>
<dbReference type="DrugBank" id="DB03562">
    <property type="generic name" value="Tetrahydrodeoxyuridine"/>
</dbReference>
<dbReference type="PaxDb" id="224308-BSU25300"/>
<dbReference type="EnsemblBacteria" id="CAB14459">
    <property type="protein sequence ID" value="CAB14459"/>
    <property type="gene ID" value="BSU_25300"/>
</dbReference>
<dbReference type="GeneID" id="937885"/>
<dbReference type="KEGG" id="bsu:BSU25300"/>
<dbReference type="PATRIC" id="fig|224308.179.peg.2750"/>
<dbReference type="eggNOG" id="COG0295">
    <property type="taxonomic scope" value="Bacteria"/>
</dbReference>
<dbReference type="InParanoid" id="P19079"/>
<dbReference type="OrthoDB" id="9795347at2"/>
<dbReference type="PhylomeDB" id="P19079"/>
<dbReference type="BioCyc" id="BSUB:BSU25300-MONOMER"/>
<dbReference type="BioCyc" id="MetaCyc:BSU25300-MONOMER"/>
<dbReference type="BRENDA" id="3.5.4.5">
    <property type="organism ID" value="658"/>
</dbReference>
<dbReference type="EvolutionaryTrace" id="P19079"/>
<dbReference type="Proteomes" id="UP000001570">
    <property type="component" value="Chromosome"/>
</dbReference>
<dbReference type="GO" id="GO:0005829">
    <property type="term" value="C:cytosol"/>
    <property type="evidence" value="ECO:0000318"/>
    <property type="project" value="GO_Central"/>
</dbReference>
<dbReference type="GO" id="GO:0004126">
    <property type="term" value="F:cytidine deaminase activity"/>
    <property type="evidence" value="ECO:0000318"/>
    <property type="project" value="GO_Central"/>
</dbReference>
<dbReference type="GO" id="GO:0042802">
    <property type="term" value="F:identical protein binding"/>
    <property type="evidence" value="ECO:0007669"/>
    <property type="project" value="UniProtKB-ARBA"/>
</dbReference>
<dbReference type="GO" id="GO:0008270">
    <property type="term" value="F:zinc ion binding"/>
    <property type="evidence" value="ECO:0000318"/>
    <property type="project" value="GO_Central"/>
</dbReference>
<dbReference type="GO" id="GO:0009972">
    <property type="term" value="P:cytidine deamination"/>
    <property type="evidence" value="ECO:0000318"/>
    <property type="project" value="GO_Central"/>
</dbReference>
<dbReference type="CDD" id="cd01283">
    <property type="entry name" value="cytidine_deaminase"/>
    <property type="match status" value="1"/>
</dbReference>
<dbReference type="FunFam" id="3.40.140.10:FF:000008">
    <property type="entry name" value="Cytidine deaminase"/>
    <property type="match status" value="1"/>
</dbReference>
<dbReference type="Gene3D" id="3.40.140.10">
    <property type="entry name" value="Cytidine Deaminase, domain 2"/>
    <property type="match status" value="1"/>
</dbReference>
<dbReference type="InterPro" id="IPR016192">
    <property type="entry name" value="APOBEC/CMP_deaminase_Zn-bd"/>
</dbReference>
<dbReference type="InterPro" id="IPR002125">
    <property type="entry name" value="CMP_dCMP_dom"/>
</dbReference>
<dbReference type="InterPro" id="IPR050202">
    <property type="entry name" value="Cyt/Deoxycyt_deaminase"/>
</dbReference>
<dbReference type="InterPro" id="IPR006262">
    <property type="entry name" value="Cyt_deam_tetra"/>
</dbReference>
<dbReference type="InterPro" id="IPR016193">
    <property type="entry name" value="Cytidine_deaminase-like"/>
</dbReference>
<dbReference type="NCBIfam" id="TIGR01354">
    <property type="entry name" value="cyt_deam_tetra"/>
    <property type="match status" value="1"/>
</dbReference>
<dbReference type="NCBIfam" id="NF004064">
    <property type="entry name" value="PRK05578.1"/>
    <property type="match status" value="1"/>
</dbReference>
<dbReference type="NCBIfam" id="NF009076">
    <property type="entry name" value="PRK12411.1"/>
    <property type="match status" value="1"/>
</dbReference>
<dbReference type="PANTHER" id="PTHR11644">
    <property type="entry name" value="CYTIDINE DEAMINASE"/>
    <property type="match status" value="1"/>
</dbReference>
<dbReference type="PANTHER" id="PTHR11644:SF2">
    <property type="entry name" value="CYTIDINE DEAMINASE"/>
    <property type="match status" value="1"/>
</dbReference>
<dbReference type="Pfam" id="PF00383">
    <property type="entry name" value="dCMP_cyt_deam_1"/>
    <property type="match status" value="1"/>
</dbReference>
<dbReference type="SUPFAM" id="SSF53927">
    <property type="entry name" value="Cytidine deaminase-like"/>
    <property type="match status" value="1"/>
</dbReference>
<dbReference type="PROSITE" id="PS00903">
    <property type="entry name" value="CYT_DCMP_DEAMINASES_1"/>
    <property type="match status" value="1"/>
</dbReference>
<dbReference type="PROSITE" id="PS51747">
    <property type="entry name" value="CYT_DCMP_DEAMINASES_2"/>
    <property type="match status" value="1"/>
</dbReference>
<organism>
    <name type="scientific">Bacillus subtilis (strain 168)</name>
    <dbReference type="NCBI Taxonomy" id="224308"/>
    <lineage>
        <taxon>Bacteria</taxon>
        <taxon>Bacillati</taxon>
        <taxon>Bacillota</taxon>
        <taxon>Bacilli</taxon>
        <taxon>Bacillales</taxon>
        <taxon>Bacillaceae</taxon>
        <taxon>Bacillus</taxon>
    </lineage>
</organism>
<sequence>MNRQELITEALKARDMAYAPYSKFQVGAALLTKDGKVYRGCNIENAAYSMCNCAERTALFKAVSEGDTEFQMLAVAADTPGPVSPCGACRQVISELCTKDVIVVLTNLQGQIKEMTVEELLPGAFSSEDLHDERKL</sequence>
<keyword id="KW-0002">3D-structure</keyword>
<keyword id="KW-0378">Hydrolase</keyword>
<keyword id="KW-0479">Metal-binding</keyword>
<keyword id="KW-1185">Reference proteome</keyword>
<keyword id="KW-0862">Zinc</keyword>
<proteinExistence type="evidence at protein level"/>
<protein>
    <recommendedName>
        <fullName>Cytidine deaminase</fullName>
        <shortName>CDA</shortName>
        <ecNumber>3.5.4.5</ecNumber>
    </recommendedName>
    <alternativeName>
        <fullName>Cytidine aminohydrolase</fullName>
    </alternativeName>
</protein>
<feature type="chain" id="PRO_0000171678" description="Cytidine deaminase">
    <location>
        <begin position="1"/>
        <end position="136"/>
    </location>
</feature>
<feature type="domain" description="CMP/dCMP-type deaminase" evidence="1">
    <location>
        <begin position="1"/>
        <end position="128"/>
    </location>
</feature>
<feature type="active site" description="Proton donor">
    <location>
        <position position="55"/>
    </location>
</feature>
<feature type="binding site">
    <location>
        <begin position="42"/>
        <end position="44"/>
    </location>
    <ligand>
        <name>substrate</name>
    </ligand>
</feature>
<feature type="binding site">
    <location>
        <position position="53"/>
    </location>
    <ligand>
        <name>Zn(2+)</name>
        <dbReference type="ChEBI" id="CHEBI:29105"/>
        <note>catalytic</note>
    </ligand>
</feature>
<feature type="binding site">
    <location>
        <position position="86"/>
    </location>
    <ligand>
        <name>Zn(2+)</name>
        <dbReference type="ChEBI" id="CHEBI:29105"/>
        <note>catalytic</note>
    </ligand>
</feature>
<feature type="binding site">
    <location>
        <position position="89"/>
    </location>
    <ligand>
        <name>Zn(2+)</name>
        <dbReference type="ChEBI" id="CHEBI:29105"/>
        <note>catalytic</note>
    </ligand>
</feature>
<feature type="mutagenesis site" description="Loss of activity. Reduces activity 500-fold, without effect on zinc binding; when associated with Q-56." evidence="3">
    <original>C</original>
    <variation>H</variation>
    <location>
        <position position="53"/>
    </location>
</feature>
<feature type="mutagenesis site" description="No effect on zinc binding. Strongly reduces Vmax." evidence="3">
    <original>R</original>
    <variation>A</variation>
    <location>
        <position position="56"/>
    </location>
</feature>
<feature type="mutagenesis site" description="Loss of activity. Reduces zinc binding by 80%." evidence="3">
    <original>R</original>
    <variation>D</variation>
    <location>
        <position position="56"/>
    </location>
</feature>
<feature type="mutagenesis site" description="No effect on zinc binding. Strongly reduces Vmax. Reduces activity 500-fold; when associated with H-53." evidence="3">
    <original>R</original>
    <variation>Q</variation>
    <location>
        <position position="56"/>
    </location>
</feature>
<feature type="helix" evidence="5">
    <location>
        <begin position="3"/>
        <end position="14"/>
    </location>
</feature>
<feature type="turn" evidence="5">
    <location>
        <begin position="20"/>
        <end position="22"/>
    </location>
</feature>
<feature type="strand" evidence="5">
    <location>
        <begin position="26"/>
        <end position="32"/>
    </location>
</feature>
<feature type="strand" evidence="5">
    <location>
        <begin position="37"/>
        <end position="41"/>
    </location>
</feature>
<feature type="helix" evidence="5">
    <location>
        <begin position="48"/>
        <end position="50"/>
    </location>
</feature>
<feature type="helix" evidence="5">
    <location>
        <begin position="54"/>
        <end position="64"/>
    </location>
</feature>
<feature type="strand" evidence="5">
    <location>
        <begin position="70"/>
        <end position="78"/>
    </location>
</feature>
<feature type="strand" evidence="5">
    <location>
        <begin position="80"/>
        <end position="82"/>
    </location>
</feature>
<feature type="helix" evidence="5">
    <location>
        <begin position="87"/>
        <end position="96"/>
    </location>
</feature>
<feature type="strand" evidence="5">
    <location>
        <begin position="102"/>
        <end position="106"/>
    </location>
</feature>
<feature type="strand" evidence="5">
    <location>
        <begin position="108"/>
        <end position="110"/>
    </location>
</feature>
<feature type="strand" evidence="5">
    <location>
        <begin position="112"/>
        <end position="116"/>
    </location>
</feature>
<feature type="helix" evidence="5">
    <location>
        <begin position="117"/>
        <end position="120"/>
    </location>
</feature>
<feature type="helix" evidence="5">
    <location>
        <begin position="127"/>
        <end position="129"/>
    </location>
</feature>
<evidence type="ECO:0000255" key="1">
    <source>
        <dbReference type="PROSITE-ProRule" id="PRU01083"/>
    </source>
</evidence>
<evidence type="ECO:0000269" key="2">
    <source>
    </source>
</evidence>
<evidence type="ECO:0000269" key="3">
    <source>
    </source>
</evidence>
<evidence type="ECO:0000305" key="4"/>
<evidence type="ECO:0007829" key="5">
    <source>
        <dbReference type="PDB" id="1UWZ"/>
    </source>
</evidence>
<accession>P19079</accession>